<feature type="chain" id="PRO_0000328982" description="Spermatogenesis-associated protein 24">
    <location>
        <begin position="1"/>
        <end position="205"/>
    </location>
</feature>
<feature type="region of interest" description="Required for interaction with CBX5 and TBPL1" evidence="1">
    <location>
        <begin position="138"/>
        <end position="185"/>
    </location>
</feature>
<feature type="region of interest" description="Disordered" evidence="3">
    <location>
        <begin position="182"/>
        <end position="205"/>
    </location>
</feature>
<feature type="coiled-coil region" evidence="2">
    <location>
        <begin position="17"/>
        <end position="166"/>
    </location>
</feature>
<feature type="compositionally biased region" description="Basic residues" evidence="3">
    <location>
        <begin position="186"/>
        <end position="205"/>
    </location>
</feature>
<feature type="splice variant" id="VSP_039460" description="In isoform 2." evidence="5">
    <original>EIESHIIKQEDILNGKENEIKELQQVISQQRQSFRNHMSDFRIQKQQETYMAQVLDQKHKKTSGTRRARSRQCSREK</original>
    <variation>GRREARAAPQVNIHGLFSNSPMMVPKAGLHPNFCPRLRIQASPGGSHLRKCLQGPGRPRK</variation>
    <location>
        <begin position="129"/>
        <end position="205"/>
    </location>
</feature>
<accession>Q4PJT6</accession>
<accession>D3ZAG4</accession>
<dbReference type="EMBL" id="DQ080016">
    <property type="protein sequence ID" value="AAY83365.1"/>
    <property type="status" value="ALT_INIT"/>
    <property type="molecule type" value="mRNA"/>
</dbReference>
<dbReference type="EMBL" id="CH473974">
    <property type="protein sequence ID" value="EDL76272.1"/>
    <property type="molecule type" value="Genomic_DNA"/>
</dbReference>
<dbReference type="RefSeq" id="NP_001020807.2">
    <property type="nucleotide sequence ID" value="NM_001025636.2"/>
</dbReference>
<dbReference type="RefSeq" id="XP_006254607.1">
    <molecule id="Q4PJT6-1"/>
    <property type="nucleotide sequence ID" value="XM_006254545.5"/>
</dbReference>
<dbReference type="SMR" id="Q4PJT6"/>
<dbReference type="FunCoup" id="Q4PJT6">
    <property type="interactions" value="357"/>
</dbReference>
<dbReference type="STRING" id="10116.ENSRNOP00000043703"/>
<dbReference type="PhosphoSitePlus" id="Q4PJT6"/>
<dbReference type="PaxDb" id="10116-ENSRNOP00000043703"/>
<dbReference type="Ensembl" id="ENSRNOT00000040091.5">
    <molecule id="Q4PJT6-1"/>
    <property type="protein sequence ID" value="ENSRNOP00000043703.2"/>
    <property type="gene ID" value="ENSRNOG00000019976.9"/>
</dbReference>
<dbReference type="GeneID" id="291676"/>
<dbReference type="KEGG" id="rno:291676"/>
<dbReference type="UCSC" id="RGD:1311742">
    <molecule id="Q4PJT6-1"/>
    <property type="organism name" value="rat"/>
</dbReference>
<dbReference type="AGR" id="RGD:1311742"/>
<dbReference type="CTD" id="202051"/>
<dbReference type="RGD" id="1311742">
    <property type="gene designation" value="Spata24"/>
</dbReference>
<dbReference type="eggNOG" id="ENOG502S3HF">
    <property type="taxonomic scope" value="Eukaryota"/>
</dbReference>
<dbReference type="GeneTree" id="ENSGT00390000007817"/>
<dbReference type="HOGENOM" id="CLU_115899_0_0_1"/>
<dbReference type="InParanoid" id="Q4PJT6"/>
<dbReference type="OMA" id="HITKQED"/>
<dbReference type="OrthoDB" id="10047985at2759"/>
<dbReference type="PhylomeDB" id="Q4PJT6"/>
<dbReference type="TreeFam" id="TF338733"/>
<dbReference type="PRO" id="PR:Q4PJT6"/>
<dbReference type="Proteomes" id="UP000002494">
    <property type="component" value="Chromosome 18"/>
</dbReference>
<dbReference type="Proteomes" id="UP000234681">
    <property type="component" value="Chromosome 18"/>
</dbReference>
<dbReference type="Bgee" id="ENSRNOG00000019976">
    <property type="expression patterns" value="Expressed in testis and 19 other cell types or tissues"/>
</dbReference>
<dbReference type="GO" id="GO:0005737">
    <property type="term" value="C:cytoplasm"/>
    <property type="evidence" value="ECO:0000266"/>
    <property type="project" value="RGD"/>
</dbReference>
<dbReference type="GO" id="GO:0005829">
    <property type="term" value="C:cytosol"/>
    <property type="evidence" value="ECO:0007669"/>
    <property type="project" value="Ensembl"/>
</dbReference>
<dbReference type="GO" id="GO:0001673">
    <property type="term" value="C:male germ cell nucleus"/>
    <property type="evidence" value="ECO:0000266"/>
    <property type="project" value="RGD"/>
</dbReference>
<dbReference type="GO" id="GO:0005730">
    <property type="term" value="C:nucleolus"/>
    <property type="evidence" value="ECO:0007669"/>
    <property type="project" value="UniProtKB-SubCell"/>
</dbReference>
<dbReference type="GO" id="GO:0005654">
    <property type="term" value="C:nucleoplasm"/>
    <property type="evidence" value="ECO:0007669"/>
    <property type="project" value="UniProtKB-SubCell"/>
</dbReference>
<dbReference type="GO" id="GO:0005634">
    <property type="term" value="C:nucleus"/>
    <property type="evidence" value="ECO:0000318"/>
    <property type="project" value="GO_Central"/>
</dbReference>
<dbReference type="GO" id="GO:0003677">
    <property type="term" value="F:DNA binding"/>
    <property type="evidence" value="ECO:0000266"/>
    <property type="project" value="RGD"/>
</dbReference>
<dbReference type="GO" id="GO:0042802">
    <property type="term" value="F:identical protein binding"/>
    <property type="evidence" value="ECO:0000266"/>
    <property type="project" value="RGD"/>
</dbReference>
<dbReference type="GO" id="GO:0030154">
    <property type="term" value="P:cell differentiation"/>
    <property type="evidence" value="ECO:0007669"/>
    <property type="project" value="UniProtKB-KW"/>
</dbReference>
<dbReference type="GO" id="GO:0007283">
    <property type="term" value="P:spermatogenesis"/>
    <property type="evidence" value="ECO:0007669"/>
    <property type="project" value="UniProtKB-KW"/>
</dbReference>
<dbReference type="InterPro" id="IPR029176">
    <property type="entry name" value="SPATA24"/>
</dbReference>
<dbReference type="PANTHER" id="PTHR35155">
    <property type="entry name" value="SPERMATOGENESIS-ASSOCIATED PROTEIN 24"/>
    <property type="match status" value="1"/>
</dbReference>
<dbReference type="PANTHER" id="PTHR35155:SF1">
    <property type="entry name" value="SPERMATOGENESIS-ASSOCIATED PROTEIN 24"/>
    <property type="match status" value="1"/>
</dbReference>
<dbReference type="Pfam" id="PF15175">
    <property type="entry name" value="SPATA24"/>
    <property type="match status" value="1"/>
</dbReference>
<protein>
    <recommendedName>
        <fullName>Spermatogenesis-associated protein 24</fullName>
    </recommendedName>
    <alternativeName>
        <fullName>Testis protein T6441</fullName>
    </alternativeName>
</protein>
<organism>
    <name type="scientific">Rattus norvegicus</name>
    <name type="common">Rat</name>
    <dbReference type="NCBI Taxonomy" id="10116"/>
    <lineage>
        <taxon>Eukaryota</taxon>
        <taxon>Metazoa</taxon>
        <taxon>Chordata</taxon>
        <taxon>Craniata</taxon>
        <taxon>Vertebrata</taxon>
        <taxon>Euteleostomi</taxon>
        <taxon>Mammalia</taxon>
        <taxon>Eutheria</taxon>
        <taxon>Euarchontoglires</taxon>
        <taxon>Glires</taxon>
        <taxon>Rodentia</taxon>
        <taxon>Myomorpha</taxon>
        <taxon>Muroidea</taxon>
        <taxon>Muridae</taxon>
        <taxon>Murinae</taxon>
        <taxon>Rattus</taxon>
    </lineage>
</organism>
<proteinExistence type="evidence at transcript level"/>
<evidence type="ECO:0000250" key="1"/>
<evidence type="ECO:0000255" key="2"/>
<evidence type="ECO:0000256" key="3">
    <source>
        <dbReference type="SAM" id="MobiDB-lite"/>
    </source>
</evidence>
<evidence type="ECO:0000269" key="4">
    <source>
    </source>
</evidence>
<evidence type="ECO:0000303" key="5">
    <source>
    </source>
</evidence>
<evidence type="ECO:0000305" key="6"/>
<sequence length="205" mass="23718">MATPLGWSQGGSGSVCLAFDQLRDVIESQEELIHQLRNVMVLQDENFVSKEEFQEVEKKLVDEKAAHAKTKALLAKEEEKLQFALGEVEVLSKQLEKEKMAFEKALSSVKSRVLQESSKKDQLITKCNEIESHIIKQEDILNGKENEIKELQQVISQQRQSFRNHMSDFRIQKQQETYMAQVLDQKHKKTSGTRRARSRQCSREK</sequence>
<gene>
    <name type="primary">Spata24</name>
</gene>
<reference key="1">
    <citation type="journal article" date="2006" name="Front. Biosci.">
        <title>Cloning and characterization of a novel spermiogenesis-related gene, T6441, in rat testis.</title>
        <authorList>
            <person name="Song X.-X."/>
            <person name="Li Y.-C."/>
            <person name="Shi Y.Q."/>
            <person name="Hu X.Q."/>
            <person name="Hu Z.Y."/>
            <person name="Han C.S."/>
            <person name="Liu Y.-X."/>
        </authorList>
    </citation>
    <scope>NUCLEOTIDE SEQUENCE [MRNA] (ISOFORM 2)</scope>
    <scope>FUNCTION</scope>
    <scope>SUBCELLULAR LOCATION</scope>
    <scope>TISSUE SPECIFICITY</scope>
    <scope>DEVELOPMENTAL STAGE</scope>
    <source>
        <strain>Sprague-Dawley</strain>
        <tissue>Testis</tissue>
    </source>
</reference>
<reference key="2">
    <citation type="submission" date="2005-07" db="EMBL/GenBank/DDBJ databases">
        <authorList>
            <person name="Mural R.J."/>
            <person name="Adams M.D."/>
            <person name="Myers E.W."/>
            <person name="Smith H.O."/>
            <person name="Venter J.C."/>
        </authorList>
    </citation>
    <scope>NUCLEOTIDE SEQUENCE [LARGE SCALE GENOMIC DNA]</scope>
</reference>
<reference key="3">
    <citation type="journal article" date="2009" name="BMC Biochem.">
        <title>TIPT2 and geminin interact with basal transcription factors to synergize in transcriptional regulation.</title>
        <authorList>
            <person name="Pitulescu M.E."/>
            <person name="Teichmann M."/>
            <person name="Luo L."/>
            <person name="Kessel M."/>
        </authorList>
    </citation>
    <scope>SUBCELLULAR LOCATION</scope>
</reference>
<name>SPA24_RAT</name>
<comment type="function">
    <text evidence="1 4">Binds DNA with high affinity but does not bind to TATA boxes. Synergises with GMNN and TBP in activation of TATA box-containing promoters and with GMNN and TBPL1 in activation of the NF1 TATA-less promoter (By similarity). May play a role in cytoplasm movement and removal during spermiogenesis.</text>
</comment>
<comment type="subunit">
    <text evidence="1">Homodimer. Interacts with CBX3, CBX5, GMNN, GTF2B, TBPL1 and the polycomb proteins PHCF2, RNF2 and SCMH1 but not with CBX1 or PCGF2 (By similarity).</text>
</comment>
<comment type="subcellular location">
    <subcellularLocation>
        <location>Cytoplasm</location>
    </subcellularLocation>
    <subcellularLocation>
        <location>Nucleus</location>
        <location>Nucleolus</location>
    </subcellularLocation>
    <subcellularLocation>
        <location>Nucleus</location>
        <location>Nucleoplasm</location>
    </subcellularLocation>
    <text evidence="1">Associated with chromatin.</text>
</comment>
<comment type="alternative products">
    <event type="alternative splicing"/>
    <isoform>
        <id>Q4PJT6-1</id>
        <name>1</name>
        <sequence type="displayed"/>
    </isoform>
    <isoform>
        <id>Q4PJT6-2</id>
        <name>2</name>
        <sequence type="described" ref="VSP_039460"/>
    </isoform>
</comment>
<comment type="tissue specificity">
    <text evidence="4">Highly expressed in the testis and is mainly localized in the spermatids. Also expressed in the lung, heart, spleen and epididymis.</text>
</comment>
<comment type="developmental stage">
    <text evidence="4">Expression is low before postnatal stage on day 20, and increases significantly between days 20 to 28.</text>
</comment>
<comment type="similarity">
    <text evidence="6">Belongs to the SPATA24 family.</text>
</comment>
<comment type="sequence caution" evidence="6">
    <conflict type="erroneous initiation">
        <sequence resource="EMBL-CDS" id="AAY83365"/>
    </conflict>
    <text>Truncated N-terminus.</text>
</comment>
<keyword id="KW-0025">Alternative splicing</keyword>
<keyword id="KW-0175">Coiled coil</keyword>
<keyword id="KW-0963">Cytoplasm</keyword>
<keyword id="KW-0217">Developmental protein</keyword>
<keyword id="KW-0221">Differentiation</keyword>
<keyword id="KW-0238">DNA-binding</keyword>
<keyword id="KW-0539">Nucleus</keyword>
<keyword id="KW-1185">Reference proteome</keyword>
<keyword id="KW-0744">Spermatogenesis</keyword>
<keyword id="KW-0804">Transcription</keyword>
<keyword id="KW-0805">Transcription regulation</keyword>